<feature type="chain" id="PRO_0000437474" description="Protein LAZY 1">
    <location>
        <begin position="1"/>
        <end position="413"/>
    </location>
</feature>
<feature type="transmembrane region" description="Helical" evidence="1">
    <location>
        <begin position="71"/>
        <end position="91"/>
    </location>
</feature>
<feature type="region of interest" description="Disordered" evidence="2">
    <location>
        <begin position="103"/>
        <end position="127"/>
    </location>
</feature>
<feature type="region of interest" description="Disordered" evidence="2">
    <location>
        <begin position="261"/>
        <end position="308"/>
    </location>
</feature>
<feature type="short sequence motif" description="Nuclear localization signal 1" evidence="3">
    <location>
        <begin position="275"/>
        <end position="298"/>
    </location>
</feature>
<feature type="short sequence motif" description="Nuclear localization signal 2" evidence="3">
    <location>
        <begin position="338"/>
        <end position="345"/>
    </location>
</feature>
<feature type="compositionally biased region" description="Acidic residues" evidence="2">
    <location>
        <begin position="103"/>
        <end position="124"/>
    </location>
</feature>
<feature type="sequence conflict" description="In Ref. 1; AEM59513." evidence="7" ref="1">
    <original>A</original>
    <variation>G</variation>
    <location>
        <position position="26"/>
    </location>
</feature>
<feature type="sequence conflict" description="In Ref. 1; AEM59513." evidence="7" ref="1">
    <original>IEDAT</original>
    <variation>VEDVA</variation>
    <location>
        <begin position="140"/>
        <end position="144"/>
    </location>
</feature>
<feature type="sequence conflict" description="In Ref. 1; AEM59513." evidence="7" ref="1">
    <original>G</original>
    <variation>GG</variation>
    <location>
        <position position="280"/>
    </location>
</feature>
<protein>
    <recommendedName>
        <fullName evidence="7">Protein LAZY 1</fullName>
        <shortName evidence="5">ZmLA1</shortName>
    </recommendedName>
    <alternativeName>
        <fullName evidence="7">Protein CONTROLLING LEAF ANGLE 4</fullName>
        <shortName evidence="6">ZmCLA4</shortName>
    </alternativeName>
    <alternativeName>
        <fullName evidence="5">Protein PROSTRATE STEM 1</fullName>
    </alternativeName>
</protein>
<reference key="1">
    <citation type="journal article" date="2014" name="J. Exp. Bot.">
        <title>The ZmCLA4 gene in the qLA4-1 QTL controls leaf angle in maize (Zea mays L.).</title>
        <authorList>
            <person name="Zhang J."/>
            <person name="Ku L.X."/>
            <person name="Han Z.P."/>
            <person name="Guo S.L."/>
            <person name="Liu H.J."/>
            <person name="Zhang Z.Z."/>
            <person name="Cao L.R."/>
            <person name="Cui X.J."/>
            <person name="Chen Y.H."/>
        </authorList>
    </citation>
    <scope>NUCLEOTIDE SEQUENCE [MRNA]</scope>
    <scope>FUNCTION</scope>
    <scope>SUBCELLULAR LOCATION</scope>
    <scope>TISSUE SPECIFICITY</scope>
    <scope>DISRUPTION PHENOTYPE</scope>
    <source>
        <tissue>Leaf</tissue>
    </source>
</reference>
<reference key="2">
    <citation type="journal article" date="2009" name="Science">
        <title>The B73 maize genome: complexity, diversity, and dynamics.</title>
        <authorList>
            <person name="Schnable P.S."/>
            <person name="Ware D."/>
            <person name="Fulton R.S."/>
            <person name="Stein J.C."/>
            <person name="Wei F."/>
            <person name="Pasternak S."/>
            <person name="Liang C."/>
            <person name="Zhang J."/>
            <person name="Fulton L."/>
            <person name="Graves T.A."/>
            <person name="Minx P."/>
            <person name="Reily A.D."/>
            <person name="Courtney L."/>
            <person name="Kruchowski S.S."/>
            <person name="Tomlinson C."/>
            <person name="Strong C."/>
            <person name="Delehaunty K."/>
            <person name="Fronick C."/>
            <person name="Courtney B."/>
            <person name="Rock S.M."/>
            <person name="Belter E."/>
            <person name="Du F."/>
            <person name="Kim K."/>
            <person name="Abbott R.M."/>
            <person name="Cotton M."/>
            <person name="Levy A."/>
            <person name="Marchetto P."/>
            <person name="Ochoa K."/>
            <person name="Jackson S.M."/>
            <person name="Gillam B."/>
            <person name="Chen W."/>
            <person name="Yan L."/>
            <person name="Higginbotham J."/>
            <person name="Cardenas M."/>
            <person name="Waligorski J."/>
            <person name="Applebaum E."/>
            <person name="Phelps L."/>
            <person name="Falcone J."/>
            <person name="Kanchi K."/>
            <person name="Thane T."/>
            <person name="Scimone A."/>
            <person name="Thane N."/>
            <person name="Henke J."/>
            <person name="Wang T."/>
            <person name="Ruppert J."/>
            <person name="Shah N."/>
            <person name="Rotter K."/>
            <person name="Hodges J."/>
            <person name="Ingenthron E."/>
            <person name="Cordes M."/>
            <person name="Kohlberg S."/>
            <person name="Sgro J."/>
            <person name="Delgado B."/>
            <person name="Mead K."/>
            <person name="Chinwalla A."/>
            <person name="Leonard S."/>
            <person name="Crouse K."/>
            <person name="Collura K."/>
            <person name="Kudrna D."/>
            <person name="Currie J."/>
            <person name="He R."/>
            <person name="Angelova A."/>
            <person name="Rajasekar S."/>
            <person name="Mueller T."/>
            <person name="Lomeli R."/>
            <person name="Scara G."/>
            <person name="Ko A."/>
            <person name="Delaney K."/>
            <person name="Wissotski M."/>
            <person name="Lopez G."/>
            <person name="Campos D."/>
            <person name="Braidotti M."/>
            <person name="Ashley E."/>
            <person name="Golser W."/>
            <person name="Kim H."/>
            <person name="Lee S."/>
            <person name="Lin J."/>
            <person name="Dujmic Z."/>
            <person name="Kim W."/>
            <person name="Talag J."/>
            <person name="Zuccolo A."/>
            <person name="Fan C."/>
            <person name="Sebastian A."/>
            <person name="Kramer M."/>
            <person name="Spiegel L."/>
            <person name="Nascimento L."/>
            <person name="Zutavern T."/>
            <person name="Miller B."/>
            <person name="Ambroise C."/>
            <person name="Muller S."/>
            <person name="Spooner W."/>
            <person name="Narechania A."/>
            <person name="Ren L."/>
            <person name="Wei S."/>
            <person name="Kumari S."/>
            <person name="Faga B."/>
            <person name="Levy M.J."/>
            <person name="McMahan L."/>
            <person name="Van Buren P."/>
            <person name="Vaughn M.W."/>
            <person name="Ying K."/>
            <person name="Yeh C.-T."/>
            <person name="Emrich S.J."/>
            <person name="Jia Y."/>
            <person name="Kalyanaraman A."/>
            <person name="Hsia A.-P."/>
            <person name="Barbazuk W.B."/>
            <person name="Baucom R.S."/>
            <person name="Brutnell T.P."/>
            <person name="Carpita N.C."/>
            <person name="Chaparro C."/>
            <person name="Chia J.-M."/>
            <person name="Deragon J.-M."/>
            <person name="Estill J.C."/>
            <person name="Fu Y."/>
            <person name="Jeddeloh J.A."/>
            <person name="Han Y."/>
            <person name="Lee H."/>
            <person name="Li P."/>
            <person name="Lisch D.R."/>
            <person name="Liu S."/>
            <person name="Liu Z."/>
            <person name="Nagel D.H."/>
            <person name="McCann M.C."/>
            <person name="SanMiguel P."/>
            <person name="Myers A.M."/>
            <person name="Nettleton D."/>
            <person name="Nguyen J."/>
            <person name="Penning B.W."/>
            <person name="Ponnala L."/>
            <person name="Schneider K.L."/>
            <person name="Schwartz D.C."/>
            <person name="Sharma A."/>
            <person name="Soderlund C."/>
            <person name="Springer N.M."/>
            <person name="Sun Q."/>
            <person name="Wang H."/>
            <person name="Waterman M."/>
            <person name="Westerman R."/>
            <person name="Wolfgruber T.K."/>
            <person name="Yang L."/>
            <person name="Yu Y."/>
            <person name="Zhang L."/>
            <person name="Zhou S."/>
            <person name="Zhu Q."/>
            <person name="Bennetzen J.L."/>
            <person name="Dawe R.K."/>
            <person name="Jiang J."/>
            <person name="Jiang N."/>
            <person name="Presting G.G."/>
            <person name="Wessler S.R."/>
            <person name="Aluru S."/>
            <person name="Martienssen R.A."/>
            <person name="Clifton S.W."/>
            <person name="McCombie W.R."/>
            <person name="Wing R.A."/>
            <person name="Wilson R.K."/>
        </authorList>
    </citation>
    <scope>NUCLEOTIDE SEQUENCE [LARGE SCALE GENOMIC DNA]</scope>
    <source>
        <strain>cv. B73</strain>
    </source>
</reference>
<reference key="3">
    <citation type="journal article" date="2009" name="PLoS Genet.">
        <title>Sequencing, mapping, and analysis of 27,455 maize full-length cDNAs.</title>
        <authorList>
            <person name="Soderlund C."/>
            <person name="Descour A."/>
            <person name="Kudrna D."/>
            <person name="Bomhoff M."/>
            <person name="Boyd L."/>
            <person name="Currie J."/>
            <person name="Angelova A."/>
            <person name="Collura K."/>
            <person name="Wissotski M."/>
            <person name="Ashley E."/>
            <person name="Morrow D."/>
            <person name="Fernandes J."/>
            <person name="Walbot V."/>
            <person name="Yu Y."/>
        </authorList>
    </citation>
    <scope>NUCLEOTIDE SEQUENCE [LARGE SCALE MRNA]</scope>
    <source>
        <strain>cv. B73</strain>
    </source>
</reference>
<reference key="4">
    <citation type="journal article" date="2013" name="Plant Physiol.">
        <title>Maize LAZY1 mediates shoot gravitropism and inflorescence development through regulating auxin transport, auxin signaling, and light response.</title>
        <authorList>
            <person name="Dong Z."/>
            <person name="Jiang C."/>
            <person name="Chen X."/>
            <person name="Zhang T."/>
            <person name="Ding L."/>
            <person name="Song W."/>
            <person name="Luo H."/>
            <person name="Lai J."/>
            <person name="Chen H."/>
            <person name="Liu R."/>
            <person name="Zhang X."/>
            <person name="Jin W."/>
        </authorList>
    </citation>
    <scope>FUNCTION</scope>
    <scope>TISSUE SPECIFICITY</scope>
    <scope>INDUCTION</scope>
    <scope>DISRUPTION PHENOTYPE</scope>
    <scope>NUCLEAR LOCALIZATION SIGNAL</scope>
</reference>
<proteinExistence type="evidence at transcript level"/>
<evidence type="ECO:0000255" key="1"/>
<evidence type="ECO:0000256" key="2">
    <source>
        <dbReference type="SAM" id="MobiDB-lite"/>
    </source>
</evidence>
<evidence type="ECO:0000269" key="3">
    <source>
    </source>
</evidence>
<evidence type="ECO:0000269" key="4">
    <source>
    </source>
</evidence>
<evidence type="ECO:0000303" key="5">
    <source>
    </source>
</evidence>
<evidence type="ECO:0000303" key="6">
    <source>
    </source>
</evidence>
<evidence type="ECO:0000305" key="7"/>
<evidence type="ECO:0000312" key="8">
    <source>
        <dbReference type="EMBL" id="AFW60749.1"/>
    </source>
</evidence>
<keyword id="KW-1003">Cell membrane</keyword>
<keyword id="KW-0341">Growth regulation</keyword>
<keyword id="KW-0472">Membrane</keyword>
<keyword id="KW-0539">Nucleus</keyword>
<keyword id="KW-1185">Reference proteome</keyword>
<keyword id="KW-0812">Transmembrane</keyword>
<keyword id="KW-1133">Transmembrane helix</keyword>
<comment type="function">
    <text evidence="3 4">Involved in the regulation of shoot gravitropism, and tassel and ear development through the regulation of polar auxin transport (PAT) and auxin signaling. Acts as a negative regulator of basipetal PAT, but positive regulator of lateral auxin transport (PubMed:24089437). Involved in the regulation of shoot gravitropism and leaf angle through the regulation of cell development (PubMed:24987012).</text>
</comment>
<comment type="subcellular location">
    <subcellularLocation>
        <location evidence="3 4">Cell membrane</location>
        <topology evidence="1">Single-pass membrane protein</topology>
    </subcellularLocation>
    <subcellularLocation>
        <location evidence="3 4">Nucleus</location>
    </subcellularLocation>
</comment>
<comment type="tissue specificity">
    <text evidence="3 4">Expressed in the node of the stem, initiating leaf founder cells, young leaf primordia, tips of axillary meristems, spikelet pair meristems of developing tassels and ears, male flower primordia, tassels, ears, silks and seeds (PubMed:24089437). Expressed in leaf sheaths, leaf pulvinus and shoot apical meristem (SAM) (PubMed:24987012).</text>
</comment>
<comment type="induction">
    <text evidence="3">Transiently down-regulated by auxin. Down-regulated by light.</text>
</comment>
<comment type="disruption phenotype">
    <text evidence="3 4">Reduced shoot gravitropism and defective inflorescence development (PubMed:24089437). Reduced shoot gravitropism and increased leaf angle (PubMed:24987012).</text>
</comment>
<comment type="similarity">
    <text evidence="7">Belongs to the LAZY family.</text>
</comment>
<dbReference type="EMBL" id="JN409349">
    <property type="protein sequence ID" value="AEM59513.1"/>
    <property type="molecule type" value="mRNA"/>
</dbReference>
<dbReference type="EMBL" id="CM000780">
    <property type="protein sequence ID" value="AFW60749.1"/>
    <property type="molecule type" value="Genomic_DNA"/>
</dbReference>
<dbReference type="EMBL" id="BT036134">
    <property type="protein sequence ID" value="ACF81139.1"/>
    <property type="molecule type" value="mRNA"/>
</dbReference>
<dbReference type="EMBL" id="BT055693">
    <property type="protein sequence ID" value="ACL54300.1"/>
    <property type="molecule type" value="mRNA"/>
</dbReference>
<dbReference type="RefSeq" id="NP_001132334.1">
    <property type="nucleotide sequence ID" value="NM_001138862.1"/>
</dbReference>
<dbReference type="SMR" id="B4FG96"/>
<dbReference type="FunCoup" id="B4FG96">
    <property type="interactions" value="3687"/>
</dbReference>
<dbReference type="STRING" id="4577.B4FG96"/>
<dbReference type="PaxDb" id="4577-GRMZM2G135019_P01"/>
<dbReference type="EnsemblPlants" id="Zm00001eb169480_T001">
    <property type="protein sequence ID" value="Zm00001eb169480_P001"/>
    <property type="gene ID" value="Zm00001eb169480"/>
</dbReference>
<dbReference type="GeneID" id="100193776"/>
<dbReference type="Gramene" id="Zm00001eb169480_T001">
    <property type="protein sequence ID" value="Zm00001eb169480_P001"/>
    <property type="gene ID" value="Zm00001eb169480"/>
</dbReference>
<dbReference type="KEGG" id="zma:100193776"/>
<dbReference type="eggNOG" id="ENOG502QRWV">
    <property type="taxonomic scope" value="Eukaryota"/>
</dbReference>
<dbReference type="HOGENOM" id="CLU_061468_0_0_1"/>
<dbReference type="InParanoid" id="B4FG96"/>
<dbReference type="OMA" id="CTCLTGQ"/>
<dbReference type="OrthoDB" id="780166at2759"/>
<dbReference type="Proteomes" id="UP000007305">
    <property type="component" value="Chromosome 4"/>
</dbReference>
<dbReference type="ExpressionAtlas" id="B4FG96">
    <property type="expression patterns" value="baseline and differential"/>
</dbReference>
<dbReference type="GO" id="GO:0005634">
    <property type="term" value="C:nucleus"/>
    <property type="evidence" value="ECO:0000314"/>
    <property type="project" value="UniProtKB"/>
</dbReference>
<dbReference type="GO" id="GO:0005886">
    <property type="term" value="C:plasma membrane"/>
    <property type="evidence" value="ECO:0000314"/>
    <property type="project" value="UniProtKB"/>
</dbReference>
<dbReference type="GO" id="GO:0009630">
    <property type="term" value="P:gravitropism"/>
    <property type="evidence" value="ECO:0007669"/>
    <property type="project" value="InterPro"/>
</dbReference>
<dbReference type="GO" id="GO:2000012">
    <property type="term" value="P:regulation of auxin polar transport"/>
    <property type="evidence" value="ECO:0000315"/>
    <property type="project" value="UniProtKB"/>
</dbReference>
<dbReference type="InterPro" id="IPR038928">
    <property type="entry name" value="LAZY1"/>
</dbReference>
<dbReference type="PANTHER" id="PTHR34959">
    <property type="entry name" value="PROTEIN LAZY 1"/>
    <property type="match status" value="1"/>
</dbReference>
<dbReference type="PANTHER" id="PTHR34959:SF3">
    <property type="entry name" value="PROTEIN LAZY 1"/>
    <property type="match status" value="1"/>
</dbReference>
<gene>
    <name evidence="7" type="primary">LA1</name>
    <name evidence="6" type="synonym">CLA4</name>
    <name evidence="5" type="synonym">PS1</name>
    <name evidence="8" type="ORF">ZEAMMB73_681845</name>
</gene>
<sequence length="413" mass="43615">MKLLGWMHRKLRQNSNDVFKEFNNAAGGTCNCITGLAASDPATFLATANEYFTADNDFTNNHPSSPAADLFTFGGSGLLTIGTLGIAAVAVSADADEVDYDVDADADSDFDDNDDTAGDDEDQVDSAVTPTFTYAAPPPIEDATVVEKAAVAVVEAIAEKDDDTTTEDDLMVVSAELEKVLGGRNSGTAGDLVASARVSFAMGVDCPLQGFLFGSPVSDAESRLEQPRDSNGGRRTSLGELFMRTRFAEEKVALVAVEEGEDGGDIGAGGERDDRKAGKGGGGHKTTKKRSAKDEKVPRGDGAQASATVTKSKFHKILQIFHRKVYPESAALARNLTKKSRKRGSGAYHKPEPAASKLRCLKEQRAPGFGCCASRASFGGAASPIDGDDDDELNGSKSGHWIKTDAEYLVLEL</sequence>
<accession>B4FG96</accession>
<accession>G3LSI0</accession>
<name>LAZY1_MAIZE</name>
<organism>
    <name type="scientific">Zea mays</name>
    <name type="common">Maize</name>
    <dbReference type="NCBI Taxonomy" id="4577"/>
    <lineage>
        <taxon>Eukaryota</taxon>
        <taxon>Viridiplantae</taxon>
        <taxon>Streptophyta</taxon>
        <taxon>Embryophyta</taxon>
        <taxon>Tracheophyta</taxon>
        <taxon>Spermatophyta</taxon>
        <taxon>Magnoliopsida</taxon>
        <taxon>Liliopsida</taxon>
        <taxon>Poales</taxon>
        <taxon>Poaceae</taxon>
        <taxon>PACMAD clade</taxon>
        <taxon>Panicoideae</taxon>
        <taxon>Andropogonodae</taxon>
        <taxon>Andropogoneae</taxon>
        <taxon>Tripsacinae</taxon>
        <taxon>Zea</taxon>
    </lineage>
</organism>